<feature type="transit peptide" description="Chloroplast" evidence="1">
    <location>
        <begin position="1"/>
        <end position="32"/>
    </location>
</feature>
<feature type="chain" id="PRO_0000406337" description="Transcription factor GTE5, chloroplastic">
    <location>
        <begin position="33"/>
        <end position="487"/>
    </location>
</feature>
<feature type="domain" description="Bromo" evidence="2">
    <location>
        <begin position="127"/>
        <end position="233"/>
    </location>
</feature>
<feature type="domain" description="NET" evidence="3">
    <location>
        <begin position="320"/>
        <end position="401"/>
    </location>
</feature>
<feature type="region of interest" description="Disordered" evidence="4">
    <location>
        <begin position="1"/>
        <end position="48"/>
    </location>
</feature>
<feature type="region of interest" description="Disordered" evidence="4">
    <location>
        <begin position="93"/>
        <end position="127"/>
    </location>
</feature>
<feature type="region of interest" description="Disordered" evidence="4">
    <location>
        <begin position="400"/>
        <end position="487"/>
    </location>
</feature>
<feature type="compositionally biased region" description="Basic and acidic residues" evidence="4">
    <location>
        <begin position="400"/>
        <end position="414"/>
    </location>
</feature>
<feature type="compositionally biased region" description="Polar residues" evidence="4">
    <location>
        <begin position="415"/>
        <end position="435"/>
    </location>
</feature>
<feature type="compositionally biased region" description="Low complexity" evidence="4">
    <location>
        <begin position="451"/>
        <end position="487"/>
    </location>
</feature>
<feature type="sequence conflict" description="In Ref. 3; AAL07107." evidence="6" ref="3">
    <original>T</original>
    <variation>I</variation>
    <location>
        <position position="181"/>
    </location>
</feature>
<accession>Q8H1D7</accession>
<accession>Q93ZU2</accession>
<accession>Q9LMU8</accession>
<comment type="subunit">
    <text evidence="5">Interacts with SIZ1 (via PHD domain).</text>
</comment>
<comment type="subcellular location">
    <subcellularLocation>
        <location evidence="6">Plastid</location>
        <location evidence="6">Chloroplast</location>
    </subcellularLocation>
</comment>
<comment type="domain">
    <text>The NET domain could serve as an interface to localize different proteins or complexes to chromatin.</text>
</comment>
<comment type="PTM">
    <text evidence="5">Sumoylated by SIZ1.</text>
</comment>
<comment type="sequence caution" evidence="6">
    <conflict type="erroneous gene model prediction">
        <sequence resource="EMBL-CDS" id="AAF97259"/>
    </conflict>
</comment>
<evidence type="ECO:0000255" key="1"/>
<evidence type="ECO:0000255" key="2">
    <source>
        <dbReference type="PROSITE-ProRule" id="PRU00035"/>
    </source>
</evidence>
<evidence type="ECO:0000255" key="3">
    <source>
        <dbReference type="PROSITE-ProRule" id="PRU00857"/>
    </source>
</evidence>
<evidence type="ECO:0000256" key="4">
    <source>
        <dbReference type="SAM" id="MobiDB-lite"/>
    </source>
</evidence>
<evidence type="ECO:0000269" key="5">
    <source>
    </source>
</evidence>
<evidence type="ECO:0000305" key="6"/>
<proteinExistence type="evidence at protein level"/>
<protein>
    <recommendedName>
        <fullName>Transcription factor GTE5, chloroplastic</fullName>
    </recommendedName>
    <alternativeName>
        <fullName>Bromodomain-containing protein GTE5</fullName>
    </alternativeName>
    <alternativeName>
        <fullName>Protein GLOBAL TRANSCRIPTION FACTOR GROUP E5</fullName>
    </alternativeName>
</protein>
<dbReference type="EMBL" id="AC034106">
    <property type="protein sequence ID" value="AAF97259.1"/>
    <property type="status" value="ALT_SEQ"/>
    <property type="molecule type" value="Genomic_DNA"/>
</dbReference>
<dbReference type="EMBL" id="CP002684">
    <property type="protein sequence ID" value="AEE29637.1"/>
    <property type="molecule type" value="Genomic_DNA"/>
</dbReference>
<dbReference type="EMBL" id="AY056258">
    <property type="protein sequence ID" value="AAL07107.1"/>
    <property type="molecule type" value="mRNA"/>
</dbReference>
<dbReference type="EMBL" id="AY150503">
    <property type="protein sequence ID" value="AAN13019.1"/>
    <property type="molecule type" value="mRNA"/>
</dbReference>
<dbReference type="PIR" id="H86312">
    <property type="entry name" value="H86312"/>
</dbReference>
<dbReference type="RefSeq" id="NP_564037.1">
    <property type="nucleotide sequence ID" value="NM_101642.3"/>
</dbReference>
<dbReference type="SMR" id="Q8H1D7"/>
<dbReference type="BioGRID" id="23596">
    <property type="interactions" value="1"/>
</dbReference>
<dbReference type="FunCoup" id="Q8H1D7">
    <property type="interactions" value="2336"/>
</dbReference>
<dbReference type="STRING" id="3702.Q8H1D7"/>
<dbReference type="iPTMnet" id="Q8H1D7"/>
<dbReference type="PaxDb" id="3702-AT1G17790.1"/>
<dbReference type="ProteomicsDB" id="247140"/>
<dbReference type="EnsemblPlants" id="AT1G17790.1">
    <property type="protein sequence ID" value="AT1G17790.1"/>
    <property type="gene ID" value="AT1G17790"/>
</dbReference>
<dbReference type="GeneID" id="838357"/>
<dbReference type="Gramene" id="AT1G17790.1">
    <property type="protein sequence ID" value="AT1G17790.1"/>
    <property type="gene ID" value="AT1G17790"/>
</dbReference>
<dbReference type="KEGG" id="ath:AT1G17790"/>
<dbReference type="Araport" id="AT1G17790"/>
<dbReference type="TAIR" id="AT1G17790"/>
<dbReference type="eggNOG" id="KOG1474">
    <property type="taxonomic scope" value="Eukaryota"/>
</dbReference>
<dbReference type="HOGENOM" id="CLU_009580_1_0_1"/>
<dbReference type="InParanoid" id="Q8H1D7"/>
<dbReference type="OMA" id="RNIMATE"/>
<dbReference type="OrthoDB" id="21449at2759"/>
<dbReference type="PhylomeDB" id="Q8H1D7"/>
<dbReference type="PRO" id="PR:Q8H1D7"/>
<dbReference type="Proteomes" id="UP000006548">
    <property type="component" value="Chromosome 1"/>
</dbReference>
<dbReference type="ExpressionAtlas" id="Q8H1D7">
    <property type="expression patterns" value="baseline and differential"/>
</dbReference>
<dbReference type="GO" id="GO:0009507">
    <property type="term" value="C:chloroplast"/>
    <property type="evidence" value="ECO:0007669"/>
    <property type="project" value="UniProtKB-SubCell"/>
</dbReference>
<dbReference type="Gene3D" id="1.20.1270.220">
    <property type="match status" value="1"/>
</dbReference>
<dbReference type="Gene3D" id="1.20.920.10">
    <property type="entry name" value="Bromodomain-like"/>
    <property type="match status" value="1"/>
</dbReference>
<dbReference type="InterPro" id="IPR001487">
    <property type="entry name" value="Bromodomain"/>
</dbReference>
<dbReference type="InterPro" id="IPR036427">
    <property type="entry name" value="Bromodomain-like_sf"/>
</dbReference>
<dbReference type="InterPro" id="IPR027353">
    <property type="entry name" value="NET_dom"/>
</dbReference>
<dbReference type="InterPro" id="IPR038336">
    <property type="entry name" value="NET_sf"/>
</dbReference>
<dbReference type="PANTHER" id="PTHR45926">
    <property type="entry name" value="OSJNBA0053K19.4 PROTEIN"/>
    <property type="match status" value="1"/>
</dbReference>
<dbReference type="Pfam" id="PF17035">
    <property type="entry name" value="BET"/>
    <property type="match status" value="1"/>
</dbReference>
<dbReference type="Pfam" id="PF00439">
    <property type="entry name" value="Bromodomain"/>
    <property type="match status" value="1"/>
</dbReference>
<dbReference type="PRINTS" id="PR00503">
    <property type="entry name" value="BROMODOMAIN"/>
</dbReference>
<dbReference type="SMART" id="SM00297">
    <property type="entry name" value="BROMO"/>
    <property type="match status" value="1"/>
</dbReference>
<dbReference type="SUPFAM" id="SSF47370">
    <property type="entry name" value="Bromodomain"/>
    <property type="match status" value="1"/>
</dbReference>
<dbReference type="PROSITE" id="PS50014">
    <property type="entry name" value="BROMODOMAIN_2"/>
    <property type="match status" value="1"/>
</dbReference>
<dbReference type="PROSITE" id="PS51525">
    <property type="entry name" value="NET"/>
    <property type="match status" value="1"/>
</dbReference>
<name>GTE5_ARATH</name>
<sequence>MSSEHISGGGASKTKKHKWSSSQNRPKPMGVSRQERSVPLVSPSNSFASEDDHHMLKISLSSISKLEVRNLKRKLKSELDEVRSLIKRFDPEANPGGSMAKSGVVGRSKKVKTGNGGGKKSGHGADKGTVQIFKNCNSLLTKLMKHKSAWVFNVPVDAKGLGLHDYHNIVKEPMDLGTVKTKLGKSLYKSPLDFAEDVRLTFNNAILYNPIGHDVYRFAELLLNMFEDKWVSIEMQYDNLHRKFKPTRDIEFPAPAPSIAPIVEPLPAIVPSPSPSSPPPPPPPPVAAPVLENRTWEREESMTIPVEPEAVITAPEKAEEEEAPVNNRDLTLEEKRRLSEELQDLPYDKLETVVQIIKKSNPELSQKDDEIELDIDSLDINTLWELYRFVTGYKESLSKKNEAHGFGSERDAESVHNSIQEPTTLVSGTTTSRVTESGKAIRTSSPARQENNASGSSSSNSSSSDSGSCSSDTDSDSSSGRGSDNGN</sequence>
<gene>
    <name type="primary">GTE5</name>
    <name type="ordered locus">At1g17790</name>
    <name type="ORF">F2H15.2</name>
</gene>
<reference key="1">
    <citation type="journal article" date="2000" name="Nature">
        <title>Sequence and analysis of chromosome 1 of the plant Arabidopsis thaliana.</title>
        <authorList>
            <person name="Theologis A."/>
            <person name="Ecker J.R."/>
            <person name="Palm C.J."/>
            <person name="Federspiel N.A."/>
            <person name="Kaul S."/>
            <person name="White O."/>
            <person name="Alonso J."/>
            <person name="Altafi H."/>
            <person name="Araujo R."/>
            <person name="Bowman C.L."/>
            <person name="Brooks S.Y."/>
            <person name="Buehler E."/>
            <person name="Chan A."/>
            <person name="Chao Q."/>
            <person name="Chen H."/>
            <person name="Cheuk R.F."/>
            <person name="Chin C.W."/>
            <person name="Chung M.K."/>
            <person name="Conn L."/>
            <person name="Conway A.B."/>
            <person name="Conway A.R."/>
            <person name="Creasy T.H."/>
            <person name="Dewar K."/>
            <person name="Dunn P."/>
            <person name="Etgu P."/>
            <person name="Feldblyum T.V."/>
            <person name="Feng J.-D."/>
            <person name="Fong B."/>
            <person name="Fujii C.Y."/>
            <person name="Gill J.E."/>
            <person name="Goldsmith A.D."/>
            <person name="Haas B."/>
            <person name="Hansen N.F."/>
            <person name="Hughes B."/>
            <person name="Huizar L."/>
            <person name="Hunter J.L."/>
            <person name="Jenkins J."/>
            <person name="Johnson-Hopson C."/>
            <person name="Khan S."/>
            <person name="Khaykin E."/>
            <person name="Kim C.J."/>
            <person name="Koo H.L."/>
            <person name="Kremenetskaia I."/>
            <person name="Kurtz D.B."/>
            <person name="Kwan A."/>
            <person name="Lam B."/>
            <person name="Langin-Hooper S."/>
            <person name="Lee A."/>
            <person name="Lee J.M."/>
            <person name="Lenz C.A."/>
            <person name="Li J.H."/>
            <person name="Li Y.-P."/>
            <person name="Lin X."/>
            <person name="Liu S.X."/>
            <person name="Liu Z.A."/>
            <person name="Luros J.S."/>
            <person name="Maiti R."/>
            <person name="Marziali A."/>
            <person name="Militscher J."/>
            <person name="Miranda M."/>
            <person name="Nguyen M."/>
            <person name="Nierman W.C."/>
            <person name="Osborne B.I."/>
            <person name="Pai G."/>
            <person name="Peterson J."/>
            <person name="Pham P.K."/>
            <person name="Rizzo M."/>
            <person name="Rooney T."/>
            <person name="Rowley D."/>
            <person name="Sakano H."/>
            <person name="Salzberg S.L."/>
            <person name="Schwartz J.R."/>
            <person name="Shinn P."/>
            <person name="Southwick A.M."/>
            <person name="Sun H."/>
            <person name="Tallon L.J."/>
            <person name="Tambunga G."/>
            <person name="Toriumi M.J."/>
            <person name="Town C.D."/>
            <person name="Utterback T."/>
            <person name="Van Aken S."/>
            <person name="Vaysberg M."/>
            <person name="Vysotskaia V.S."/>
            <person name="Walker M."/>
            <person name="Wu D."/>
            <person name="Yu G."/>
            <person name="Fraser C.M."/>
            <person name="Venter J.C."/>
            <person name="Davis R.W."/>
        </authorList>
    </citation>
    <scope>NUCLEOTIDE SEQUENCE [LARGE SCALE GENOMIC DNA]</scope>
    <source>
        <strain>cv. Columbia</strain>
    </source>
</reference>
<reference key="2">
    <citation type="journal article" date="2017" name="Plant J.">
        <title>Araport11: a complete reannotation of the Arabidopsis thaliana reference genome.</title>
        <authorList>
            <person name="Cheng C.Y."/>
            <person name="Krishnakumar V."/>
            <person name="Chan A.P."/>
            <person name="Thibaud-Nissen F."/>
            <person name="Schobel S."/>
            <person name="Town C.D."/>
        </authorList>
    </citation>
    <scope>GENOME REANNOTATION</scope>
    <source>
        <strain>cv. Columbia</strain>
    </source>
</reference>
<reference key="3">
    <citation type="journal article" date="2003" name="Science">
        <title>Empirical analysis of transcriptional activity in the Arabidopsis genome.</title>
        <authorList>
            <person name="Yamada K."/>
            <person name="Lim J."/>
            <person name="Dale J.M."/>
            <person name="Chen H."/>
            <person name="Shinn P."/>
            <person name="Palm C.J."/>
            <person name="Southwick A.M."/>
            <person name="Wu H.C."/>
            <person name="Kim C.J."/>
            <person name="Nguyen M."/>
            <person name="Pham P.K."/>
            <person name="Cheuk R.F."/>
            <person name="Karlin-Newmann G."/>
            <person name="Liu S.X."/>
            <person name="Lam B."/>
            <person name="Sakano H."/>
            <person name="Wu T."/>
            <person name="Yu G."/>
            <person name="Miranda M."/>
            <person name="Quach H.L."/>
            <person name="Tripp M."/>
            <person name="Chang C.H."/>
            <person name="Lee J.M."/>
            <person name="Toriumi M.J."/>
            <person name="Chan M.M."/>
            <person name="Tang C.C."/>
            <person name="Onodera C.S."/>
            <person name="Deng J.M."/>
            <person name="Akiyama K."/>
            <person name="Ansari Y."/>
            <person name="Arakawa T."/>
            <person name="Banh J."/>
            <person name="Banno F."/>
            <person name="Bowser L."/>
            <person name="Brooks S.Y."/>
            <person name="Carninci P."/>
            <person name="Chao Q."/>
            <person name="Choy N."/>
            <person name="Enju A."/>
            <person name="Goldsmith A.D."/>
            <person name="Gurjal M."/>
            <person name="Hansen N.F."/>
            <person name="Hayashizaki Y."/>
            <person name="Johnson-Hopson C."/>
            <person name="Hsuan V.W."/>
            <person name="Iida K."/>
            <person name="Karnes M."/>
            <person name="Khan S."/>
            <person name="Koesema E."/>
            <person name="Ishida J."/>
            <person name="Jiang P.X."/>
            <person name="Jones T."/>
            <person name="Kawai J."/>
            <person name="Kamiya A."/>
            <person name="Meyers C."/>
            <person name="Nakajima M."/>
            <person name="Narusaka M."/>
            <person name="Seki M."/>
            <person name="Sakurai T."/>
            <person name="Satou M."/>
            <person name="Tamse R."/>
            <person name="Vaysberg M."/>
            <person name="Wallender E.K."/>
            <person name="Wong C."/>
            <person name="Yamamura Y."/>
            <person name="Yuan S."/>
            <person name="Shinozaki K."/>
            <person name="Davis R.W."/>
            <person name="Theologis A."/>
            <person name="Ecker J.R."/>
        </authorList>
    </citation>
    <scope>NUCLEOTIDE SEQUENCE [LARGE SCALE MRNA]</scope>
    <source>
        <strain>cv. Columbia</strain>
    </source>
</reference>
<reference key="4">
    <citation type="journal article" date="2002" name="Nucleic Acids Res.">
        <title>Analysis of histone acetyltransferase and histone deacetylase families of Arabidopsis thaliana suggests functional diversification of chromatin modification among multicellular eukaryotes.</title>
        <authorList>
            <person name="Pandey R."/>
            <person name="Mueller A."/>
            <person name="Napoli C.A."/>
            <person name="Selinger D.A."/>
            <person name="Pikaard C.S."/>
            <person name="Richards E.J."/>
            <person name="Bender J."/>
            <person name="Mount D.W."/>
            <person name="Jorgensen R.A."/>
        </authorList>
    </citation>
    <scope>GENE FAMILY</scope>
    <scope>NOMENCLATURE</scope>
</reference>
<reference key="5">
    <citation type="journal article" date="2008" name="J. Biol. Chem.">
        <title>The PHD domain of plant PIAS proteins mediates sumoylation of bromodomain GTE proteins.</title>
        <authorList>
            <person name="Garcia-Dominguez M."/>
            <person name="March-Diaz R."/>
            <person name="Reyes J.C."/>
        </authorList>
    </citation>
    <scope>INTERACTION WITH SIZ1</scope>
    <scope>SUMOYLATION</scope>
</reference>
<organism>
    <name type="scientific">Arabidopsis thaliana</name>
    <name type="common">Mouse-ear cress</name>
    <dbReference type="NCBI Taxonomy" id="3702"/>
    <lineage>
        <taxon>Eukaryota</taxon>
        <taxon>Viridiplantae</taxon>
        <taxon>Streptophyta</taxon>
        <taxon>Embryophyta</taxon>
        <taxon>Tracheophyta</taxon>
        <taxon>Spermatophyta</taxon>
        <taxon>Magnoliopsida</taxon>
        <taxon>eudicotyledons</taxon>
        <taxon>Gunneridae</taxon>
        <taxon>Pentapetalae</taxon>
        <taxon>rosids</taxon>
        <taxon>malvids</taxon>
        <taxon>Brassicales</taxon>
        <taxon>Brassicaceae</taxon>
        <taxon>Camelineae</taxon>
        <taxon>Arabidopsis</taxon>
    </lineage>
</organism>
<keyword id="KW-0103">Bromodomain</keyword>
<keyword id="KW-0150">Chloroplast</keyword>
<keyword id="KW-0934">Plastid</keyword>
<keyword id="KW-1185">Reference proteome</keyword>
<keyword id="KW-0804">Transcription</keyword>
<keyword id="KW-0805">Transcription regulation</keyword>
<keyword id="KW-0809">Transit peptide</keyword>
<keyword id="KW-0832">Ubl conjugation</keyword>